<evidence type="ECO:0000250" key="1">
    <source>
        <dbReference type="UniProtKB" id="Q8IWB7"/>
    </source>
</evidence>
<evidence type="ECO:0000255" key="2">
    <source>
        <dbReference type="PROSITE-ProRule" id="PRU00091"/>
    </source>
</evidence>
<comment type="function">
    <text evidence="1">Positively regulates TLR3- and TLR4-mediated signaling pathways by bridging the interaction between TLR3 or TLR4 and TICAM1. Promotes TLR3/4 ligand-induced activation of transcription factors IRF3 and NF-kappa-B, as well as the production of IFN-beta and inflammatory cytokines.</text>
</comment>
<comment type="subunit">
    <text evidence="1">Binds PtdIns3P in vitro with high specificity over other phosphoinositides. Interacts (via WD repeat 2) with tyrosine-phosphorylated TLR3 (via TIR domain) in response to poly(I:C). Interacts with TLR4 in response to LPS. Interacts with TICAM1 in response to poly(I:C).</text>
</comment>
<comment type="subcellular location">
    <subcellularLocation>
        <location evidence="1">Early endosome</location>
    </subcellularLocation>
</comment>
<comment type="domain">
    <text evidence="1">The FYVE-type zinc finger domain mediates interactions with phosphatidylinositol 3-phosphate in membranes of early endosomes and penetrates bilayers. The FYVE domain insertion into PtdIns(3)P-enriched membranes is substantially increased in acidic conditions. The FYVE domain is required for its function in regulating TLR3 signaling.</text>
</comment>
<dbReference type="EMBL" id="BC112463">
    <property type="protein sequence ID" value="AAI12464.1"/>
    <property type="molecule type" value="mRNA"/>
</dbReference>
<dbReference type="RefSeq" id="NP_001040007.1">
    <property type="nucleotide sequence ID" value="NM_001046542.2"/>
</dbReference>
<dbReference type="SMR" id="Q2KIY3"/>
<dbReference type="FunCoup" id="Q2KIY3">
    <property type="interactions" value="4513"/>
</dbReference>
<dbReference type="STRING" id="9913.ENSBTAP00000022552"/>
<dbReference type="PaxDb" id="9913-ENSBTAP00000022552"/>
<dbReference type="Ensembl" id="ENSBTAT00000022552.6">
    <property type="protein sequence ID" value="ENSBTAP00000022552.4"/>
    <property type="gene ID" value="ENSBTAG00000016951.6"/>
</dbReference>
<dbReference type="GeneID" id="614729"/>
<dbReference type="KEGG" id="bta:614729"/>
<dbReference type="CTD" id="57590"/>
<dbReference type="VEuPathDB" id="HostDB:ENSBTAG00000016951"/>
<dbReference type="VGNC" id="VGNC:36876">
    <property type="gene designation" value="WDFY1"/>
</dbReference>
<dbReference type="eggNOG" id="KOG1409">
    <property type="taxonomic scope" value="Eukaryota"/>
</dbReference>
<dbReference type="GeneTree" id="ENSGT00940000157731"/>
<dbReference type="HOGENOM" id="CLU_046919_0_0_1"/>
<dbReference type="InParanoid" id="Q2KIY3"/>
<dbReference type="OMA" id="IFCLGAE"/>
<dbReference type="OrthoDB" id="63070at2759"/>
<dbReference type="TreeFam" id="TF314470"/>
<dbReference type="Proteomes" id="UP000009136">
    <property type="component" value="Chromosome 2"/>
</dbReference>
<dbReference type="Bgee" id="ENSBTAG00000016951">
    <property type="expression patterns" value="Expressed in granulosa cell and 107 other cell types or tissues"/>
</dbReference>
<dbReference type="GO" id="GO:0030054">
    <property type="term" value="C:cell junction"/>
    <property type="evidence" value="ECO:0007669"/>
    <property type="project" value="Ensembl"/>
</dbReference>
<dbReference type="GO" id="GO:0005829">
    <property type="term" value="C:cytosol"/>
    <property type="evidence" value="ECO:0007669"/>
    <property type="project" value="Ensembl"/>
</dbReference>
<dbReference type="GO" id="GO:0005769">
    <property type="term" value="C:early endosome"/>
    <property type="evidence" value="ECO:0000250"/>
    <property type="project" value="UniProtKB"/>
</dbReference>
<dbReference type="GO" id="GO:0005794">
    <property type="term" value="C:Golgi apparatus"/>
    <property type="evidence" value="ECO:0007669"/>
    <property type="project" value="Ensembl"/>
</dbReference>
<dbReference type="GO" id="GO:0005730">
    <property type="term" value="C:nucleolus"/>
    <property type="evidence" value="ECO:0007669"/>
    <property type="project" value="Ensembl"/>
</dbReference>
<dbReference type="GO" id="GO:0005545">
    <property type="term" value="F:1-phosphatidylinositol binding"/>
    <property type="evidence" value="ECO:0007669"/>
    <property type="project" value="Ensembl"/>
</dbReference>
<dbReference type="GO" id="GO:0008270">
    <property type="term" value="F:zinc ion binding"/>
    <property type="evidence" value="ECO:0007669"/>
    <property type="project" value="UniProtKB-KW"/>
</dbReference>
<dbReference type="GO" id="GO:0034141">
    <property type="term" value="P:positive regulation of toll-like receptor 3 signaling pathway"/>
    <property type="evidence" value="ECO:0000250"/>
    <property type="project" value="UniProtKB"/>
</dbReference>
<dbReference type="GO" id="GO:0034145">
    <property type="term" value="P:positive regulation of toll-like receptor 4 signaling pathway"/>
    <property type="evidence" value="ECO:0000250"/>
    <property type="project" value="UniProtKB"/>
</dbReference>
<dbReference type="CDD" id="cd15756">
    <property type="entry name" value="FYVE_WDFY1"/>
    <property type="match status" value="1"/>
</dbReference>
<dbReference type="FunFam" id="2.130.10.10:FF:000285">
    <property type="entry name" value="WD repeat and FYVE domain-containing protein 1"/>
    <property type="match status" value="1"/>
</dbReference>
<dbReference type="FunFam" id="2.130.10.10:FF:000433">
    <property type="entry name" value="WD repeat and FYVE domain-containing protein 1"/>
    <property type="match status" value="1"/>
</dbReference>
<dbReference type="FunFam" id="3.30.40.10:FF:000105">
    <property type="entry name" value="WD repeat and FYVE domain-containing protein 2"/>
    <property type="match status" value="1"/>
</dbReference>
<dbReference type="Gene3D" id="2.130.10.10">
    <property type="entry name" value="YVTN repeat-like/Quinoprotein amine dehydrogenase"/>
    <property type="match status" value="2"/>
</dbReference>
<dbReference type="Gene3D" id="3.30.40.10">
    <property type="entry name" value="Zinc/RING finger domain, C3HC4 (zinc finger)"/>
    <property type="match status" value="1"/>
</dbReference>
<dbReference type="InterPro" id="IPR020472">
    <property type="entry name" value="G-protein_beta_WD-40_rep"/>
</dbReference>
<dbReference type="InterPro" id="IPR015943">
    <property type="entry name" value="WD40/YVTN_repeat-like_dom_sf"/>
</dbReference>
<dbReference type="InterPro" id="IPR019775">
    <property type="entry name" value="WD40_repeat_CS"/>
</dbReference>
<dbReference type="InterPro" id="IPR036322">
    <property type="entry name" value="WD40_repeat_dom_sf"/>
</dbReference>
<dbReference type="InterPro" id="IPR001680">
    <property type="entry name" value="WD40_rpt"/>
</dbReference>
<dbReference type="InterPro" id="IPR042234">
    <property type="entry name" value="WDFY1/WDFY2"/>
</dbReference>
<dbReference type="InterPro" id="IPR042733">
    <property type="entry name" value="WDFY1_FYVE"/>
</dbReference>
<dbReference type="InterPro" id="IPR000306">
    <property type="entry name" value="Znf_FYVE"/>
</dbReference>
<dbReference type="InterPro" id="IPR017455">
    <property type="entry name" value="Znf_FYVE-rel"/>
</dbReference>
<dbReference type="InterPro" id="IPR011011">
    <property type="entry name" value="Znf_FYVE_PHD"/>
</dbReference>
<dbReference type="InterPro" id="IPR013083">
    <property type="entry name" value="Znf_RING/FYVE/PHD"/>
</dbReference>
<dbReference type="PANTHER" id="PTHR46189">
    <property type="entry name" value="LD41958P"/>
    <property type="match status" value="1"/>
</dbReference>
<dbReference type="PANTHER" id="PTHR46189:SF2">
    <property type="entry name" value="WD REPEAT AND FYVE DOMAIN-CONTAINING PROTEIN 1"/>
    <property type="match status" value="1"/>
</dbReference>
<dbReference type="Pfam" id="PF01363">
    <property type="entry name" value="FYVE"/>
    <property type="match status" value="1"/>
</dbReference>
<dbReference type="Pfam" id="PF00400">
    <property type="entry name" value="WD40"/>
    <property type="match status" value="5"/>
</dbReference>
<dbReference type="PRINTS" id="PR00320">
    <property type="entry name" value="GPROTEINBRPT"/>
</dbReference>
<dbReference type="SMART" id="SM00064">
    <property type="entry name" value="FYVE"/>
    <property type="match status" value="1"/>
</dbReference>
<dbReference type="SMART" id="SM00320">
    <property type="entry name" value="WD40"/>
    <property type="match status" value="7"/>
</dbReference>
<dbReference type="SUPFAM" id="SSF57903">
    <property type="entry name" value="FYVE/PHD zinc finger"/>
    <property type="match status" value="1"/>
</dbReference>
<dbReference type="SUPFAM" id="SSF50978">
    <property type="entry name" value="WD40 repeat-like"/>
    <property type="match status" value="1"/>
</dbReference>
<dbReference type="PROSITE" id="PS00678">
    <property type="entry name" value="WD_REPEATS_1"/>
    <property type="match status" value="3"/>
</dbReference>
<dbReference type="PROSITE" id="PS50082">
    <property type="entry name" value="WD_REPEATS_2"/>
    <property type="match status" value="3"/>
</dbReference>
<dbReference type="PROSITE" id="PS50294">
    <property type="entry name" value="WD_REPEATS_REGION"/>
    <property type="match status" value="1"/>
</dbReference>
<dbReference type="PROSITE" id="PS50178">
    <property type="entry name" value="ZF_FYVE"/>
    <property type="match status" value="1"/>
</dbReference>
<keyword id="KW-0967">Endosome</keyword>
<keyword id="KW-0479">Metal-binding</keyword>
<keyword id="KW-0597">Phosphoprotein</keyword>
<keyword id="KW-1185">Reference proteome</keyword>
<keyword id="KW-0677">Repeat</keyword>
<keyword id="KW-0853">WD repeat</keyword>
<keyword id="KW-0862">Zinc</keyword>
<keyword id="KW-0863">Zinc-finger</keyword>
<feature type="chain" id="PRO_0000244455" description="WD repeat and FYVE domain-containing protein 1">
    <location>
        <begin position="1"/>
        <end position="410"/>
    </location>
</feature>
<feature type="repeat" description="WD 1">
    <location>
        <begin position="22"/>
        <end position="61"/>
    </location>
</feature>
<feature type="repeat" description="WD 2">
    <location>
        <begin position="66"/>
        <end position="105"/>
    </location>
</feature>
<feature type="repeat" description="WD 3">
    <location>
        <begin position="112"/>
        <end position="150"/>
    </location>
</feature>
<feature type="repeat" description="WD 4">
    <location>
        <begin position="153"/>
        <end position="192"/>
    </location>
</feature>
<feature type="repeat" description="WD 5">
    <location>
        <begin position="197"/>
        <end position="236"/>
    </location>
</feature>
<feature type="repeat" description="WD 6">
    <location>
        <begin position="240"/>
        <end position="279"/>
    </location>
</feature>
<feature type="repeat" description="WD 7">
    <location>
        <begin position="364"/>
        <end position="403"/>
    </location>
</feature>
<feature type="zinc finger region" description="FYVE-type" evidence="2">
    <location>
        <begin position="281"/>
        <end position="352"/>
    </location>
</feature>
<feature type="binding site" evidence="2">
    <location>
        <position position="287"/>
    </location>
    <ligand>
        <name>Zn(2+)</name>
        <dbReference type="ChEBI" id="CHEBI:29105"/>
        <label>1</label>
    </ligand>
</feature>
<feature type="binding site" evidence="2">
    <location>
        <position position="290"/>
    </location>
    <ligand>
        <name>Zn(2+)</name>
        <dbReference type="ChEBI" id="CHEBI:29105"/>
        <label>1</label>
    </ligand>
</feature>
<feature type="binding site" evidence="2">
    <location>
        <position position="314"/>
    </location>
    <ligand>
        <name>Zn(2+)</name>
        <dbReference type="ChEBI" id="CHEBI:29105"/>
        <label>2</label>
    </ligand>
</feature>
<feature type="binding site" evidence="2">
    <location>
        <position position="317"/>
    </location>
    <ligand>
        <name>Zn(2+)</name>
        <dbReference type="ChEBI" id="CHEBI:29105"/>
        <label>2</label>
    </ligand>
</feature>
<feature type="binding site" evidence="2">
    <location>
        <position position="322"/>
    </location>
    <ligand>
        <name>Zn(2+)</name>
        <dbReference type="ChEBI" id="CHEBI:29105"/>
        <label>1</label>
    </ligand>
</feature>
<feature type="binding site" evidence="2">
    <location>
        <position position="325"/>
    </location>
    <ligand>
        <name>Zn(2+)</name>
        <dbReference type="ChEBI" id="CHEBI:29105"/>
        <label>1</label>
    </ligand>
</feature>
<feature type="binding site" evidence="2">
    <location>
        <position position="344"/>
    </location>
    <ligand>
        <name>Zn(2+)</name>
        <dbReference type="ChEBI" id="CHEBI:29105"/>
        <label>2</label>
    </ligand>
</feature>
<feature type="binding site" evidence="2">
    <location>
        <position position="347"/>
    </location>
    <ligand>
        <name>Zn(2+)</name>
        <dbReference type="ChEBI" id="CHEBI:29105"/>
        <label>2</label>
    </ligand>
</feature>
<feature type="modified residue" description="Phosphoserine" evidence="1">
    <location>
        <position position="408"/>
    </location>
</feature>
<reference key="1">
    <citation type="submission" date="2006-01" db="EMBL/GenBank/DDBJ databases">
        <authorList>
            <consortium name="NIH - Mammalian Gene Collection (MGC) project"/>
        </authorList>
    </citation>
    <scope>NUCLEOTIDE SEQUENCE [LARGE SCALE MRNA]</scope>
    <source>
        <strain>Hereford</strain>
        <tissue>Testis</tissue>
    </source>
</reference>
<accession>Q2KIY3</accession>
<sequence length="410" mass="46281">MAAEIHSRPQSSRPVLLSKIEGHQDAVTAALLIPKEDGVITASEDRTIRVWLKRDSGQYWPSIYHTMASPCSAMAYHHDSRRIFVGQDNGAVMEFHVSEDFNKMNFIKTYPAHQNRVTAIIFSLATEWVISTGHDKCVSWMCTRSGNMLGRHFFSSWASCLQYDFDTQYAFVGDYSGQITLLKLEQSTCSVITTLKGHEGSIACLWWDPIQRLLFSGASDNSVIMWDIGGRKGRTLLLQGHHDRVQALCYLQLTRQLVSCSSDGGIAVWNMDVSREEAPQWLESDSCQKCEQPFFWNIKQMWDTKTLGLRQHHCRKCGQAVCGKCSSKRSSYPVMGFEFQVRVCDSCYDSIKDEDRTSLATFHEGKHNISHMSMDVARGLMVTCGTDRVVKIWDMTPVVGCSLATGFSPH</sequence>
<organism>
    <name type="scientific">Bos taurus</name>
    <name type="common">Bovine</name>
    <dbReference type="NCBI Taxonomy" id="9913"/>
    <lineage>
        <taxon>Eukaryota</taxon>
        <taxon>Metazoa</taxon>
        <taxon>Chordata</taxon>
        <taxon>Craniata</taxon>
        <taxon>Vertebrata</taxon>
        <taxon>Euteleostomi</taxon>
        <taxon>Mammalia</taxon>
        <taxon>Eutheria</taxon>
        <taxon>Laurasiatheria</taxon>
        <taxon>Artiodactyla</taxon>
        <taxon>Ruminantia</taxon>
        <taxon>Pecora</taxon>
        <taxon>Bovidae</taxon>
        <taxon>Bovinae</taxon>
        <taxon>Bos</taxon>
    </lineage>
</organism>
<gene>
    <name type="primary">WDFY1</name>
</gene>
<name>WDFY1_BOVIN</name>
<protein>
    <recommendedName>
        <fullName>WD repeat and FYVE domain-containing protein 1</fullName>
    </recommendedName>
    <alternativeName>
        <fullName>WD40- and FYVE domain-containing protein 1</fullName>
    </alternativeName>
</protein>
<proteinExistence type="evidence at transcript level"/>